<organism>
    <name type="scientific">Drosophila melanogaster</name>
    <name type="common">Fruit fly</name>
    <dbReference type="NCBI Taxonomy" id="7227"/>
    <lineage>
        <taxon>Eukaryota</taxon>
        <taxon>Metazoa</taxon>
        <taxon>Ecdysozoa</taxon>
        <taxon>Arthropoda</taxon>
        <taxon>Hexapoda</taxon>
        <taxon>Insecta</taxon>
        <taxon>Pterygota</taxon>
        <taxon>Neoptera</taxon>
        <taxon>Endopterygota</taxon>
        <taxon>Diptera</taxon>
        <taxon>Brachycera</taxon>
        <taxon>Muscomorpha</taxon>
        <taxon>Ephydroidea</taxon>
        <taxon>Drosophilidae</taxon>
        <taxon>Drosophila</taxon>
        <taxon>Sophophora</taxon>
    </lineage>
</organism>
<proteinExistence type="evidence at transcript level"/>
<dbReference type="EMBL" id="AE014298">
    <property type="protein sequence ID" value="AAF46328.1"/>
    <property type="molecule type" value="Genomic_DNA"/>
</dbReference>
<dbReference type="EMBL" id="AY051637">
    <property type="protein sequence ID" value="AAK93061.1"/>
    <property type="molecule type" value="mRNA"/>
</dbReference>
<dbReference type="RefSeq" id="NP_572445.1">
    <property type="nucleotide sequence ID" value="NM_132217.4"/>
</dbReference>
<dbReference type="SMR" id="Q9W3J8"/>
<dbReference type="BioGRID" id="58204">
    <property type="interactions" value="1"/>
</dbReference>
<dbReference type="FunCoup" id="Q9W3J8">
    <property type="interactions" value="29"/>
</dbReference>
<dbReference type="IntAct" id="Q9W3J8">
    <property type="interactions" value="7"/>
</dbReference>
<dbReference type="STRING" id="7227.FBpp0071104"/>
<dbReference type="PaxDb" id="7227-FBpp0071104"/>
<dbReference type="DNASU" id="31736"/>
<dbReference type="EnsemblMetazoa" id="FBtr0071153">
    <property type="protein sequence ID" value="FBpp0071104"/>
    <property type="gene ID" value="FBgn0030004"/>
</dbReference>
<dbReference type="GeneID" id="31736"/>
<dbReference type="KEGG" id="dme:Dmel_CG10958"/>
<dbReference type="UCSC" id="CG10958-RA">
    <property type="organism name" value="d. melanogaster"/>
</dbReference>
<dbReference type="AGR" id="FB:FBgn0030004"/>
<dbReference type="FlyBase" id="FBgn0030004">
    <property type="gene designation" value="CG10958"/>
</dbReference>
<dbReference type="VEuPathDB" id="VectorBase:FBgn0030004"/>
<dbReference type="eggNOG" id="ENOG502QQ2B">
    <property type="taxonomic scope" value="Eukaryota"/>
</dbReference>
<dbReference type="GeneTree" id="ENSGT00940000153804"/>
<dbReference type="HOGENOM" id="CLU_012489_0_1_1"/>
<dbReference type="InParanoid" id="Q9W3J8"/>
<dbReference type="OMA" id="LDFMMAR"/>
<dbReference type="OrthoDB" id="10260459at2759"/>
<dbReference type="PhylomeDB" id="Q9W3J8"/>
<dbReference type="BioGRID-ORCS" id="31736">
    <property type="hits" value="0 hits in 1 CRISPR screen"/>
</dbReference>
<dbReference type="GenomeRNAi" id="31736"/>
<dbReference type="PRO" id="PR:Q9W3J8"/>
<dbReference type="Proteomes" id="UP000000803">
    <property type="component" value="Chromosome X"/>
</dbReference>
<dbReference type="Bgee" id="FBgn0030004">
    <property type="expression patterns" value="Expressed in mid-late elongation-stage spermatid (Drosophila) in testis and 38 other cell types or tissues"/>
</dbReference>
<dbReference type="GO" id="GO:0005858">
    <property type="term" value="C:axonemal dynein complex"/>
    <property type="evidence" value="ECO:0007669"/>
    <property type="project" value="InterPro"/>
</dbReference>
<dbReference type="GO" id="GO:0005930">
    <property type="term" value="C:axoneme"/>
    <property type="evidence" value="ECO:0000318"/>
    <property type="project" value="GO_Central"/>
</dbReference>
<dbReference type="GO" id="GO:0070286">
    <property type="term" value="P:axonemal dynein complex assembly"/>
    <property type="evidence" value="ECO:0000318"/>
    <property type="project" value="GO_Central"/>
</dbReference>
<dbReference type="GO" id="GO:0060285">
    <property type="term" value="P:cilium-dependent cell motility"/>
    <property type="evidence" value="ECO:0000318"/>
    <property type="project" value="GO_Central"/>
</dbReference>
<dbReference type="GO" id="GO:0003352">
    <property type="term" value="P:regulation of cilium movement"/>
    <property type="evidence" value="ECO:0000318"/>
    <property type="project" value="GO_Central"/>
</dbReference>
<dbReference type="InterPro" id="IPR039505">
    <property type="entry name" value="DRC1/2_N"/>
</dbReference>
<dbReference type="InterPro" id="IPR039750">
    <property type="entry name" value="DRC1/DRC2"/>
</dbReference>
<dbReference type="InterPro" id="IPR029440">
    <property type="entry name" value="DRC1_C"/>
</dbReference>
<dbReference type="PANTHER" id="PTHR21625:SF1">
    <property type="entry name" value="DYNEIN REGULATORY COMPLEX PROTEIN 1"/>
    <property type="match status" value="1"/>
</dbReference>
<dbReference type="PANTHER" id="PTHR21625">
    <property type="entry name" value="NYD-SP28 PROTEIN"/>
    <property type="match status" value="1"/>
</dbReference>
<dbReference type="Pfam" id="PF14772">
    <property type="entry name" value="NYD-SP28"/>
    <property type="match status" value="1"/>
</dbReference>
<dbReference type="Pfam" id="PF14775">
    <property type="entry name" value="NYD-SP28_assoc"/>
    <property type="match status" value="1"/>
</dbReference>
<feature type="chain" id="PRO_0000277886" description="Dynein regulatory complex protein 1 homolog">
    <location>
        <begin position="1"/>
        <end position="743"/>
    </location>
</feature>
<feature type="region of interest" description="Disordered" evidence="2">
    <location>
        <begin position="1"/>
        <end position="34"/>
    </location>
</feature>
<feature type="region of interest" description="Disordered" evidence="2">
    <location>
        <begin position="599"/>
        <end position="620"/>
    </location>
</feature>
<feature type="coiled-coil region" evidence="1">
    <location>
        <begin position="175"/>
        <end position="332"/>
    </location>
</feature>
<feature type="coiled-coil region" evidence="1">
    <location>
        <begin position="395"/>
        <end position="416"/>
    </location>
</feature>
<feature type="coiled-coil region" evidence="1">
    <location>
        <begin position="715"/>
        <end position="742"/>
    </location>
</feature>
<feature type="compositionally biased region" description="Acidic residues" evidence="2">
    <location>
        <begin position="1"/>
        <end position="10"/>
    </location>
</feature>
<feature type="compositionally biased region" description="Acidic residues" evidence="2">
    <location>
        <begin position="19"/>
        <end position="28"/>
    </location>
</feature>
<reference key="1">
    <citation type="journal article" date="2000" name="Science">
        <title>The genome sequence of Drosophila melanogaster.</title>
        <authorList>
            <person name="Adams M.D."/>
            <person name="Celniker S.E."/>
            <person name="Holt R.A."/>
            <person name="Evans C.A."/>
            <person name="Gocayne J.D."/>
            <person name="Amanatides P.G."/>
            <person name="Scherer S.E."/>
            <person name="Li P.W."/>
            <person name="Hoskins R.A."/>
            <person name="Galle R.F."/>
            <person name="George R.A."/>
            <person name="Lewis S.E."/>
            <person name="Richards S."/>
            <person name="Ashburner M."/>
            <person name="Henderson S.N."/>
            <person name="Sutton G.G."/>
            <person name="Wortman J.R."/>
            <person name="Yandell M.D."/>
            <person name="Zhang Q."/>
            <person name="Chen L.X."/>
            <person name="Brandon R.C."/>
            <person name="Rogers Y.-H.C."/>
            <person name="Blazej R.G."/>
            <person name="Champe M."/>
            <person name="Pfeiffer B.D."/>
            <person name="Wan K.H."/>
            <person name="Doyle C."/>
            <person name="Baxter E.G."/>
            <person name="Helt G."/>
            <person name="Nelson C.R."/>
            <person name="Miklos G.L.G."/>
            <person name="Abril J.F."/>
            <person name="Agbayani A."/>
            <person name="An H.-J."/>
            <person name="Andrews-Pfannkoch C."/>
            <person name="Baldwin D."/>
            <person name="Ballew R.M."/>
            <person name="Basu A."/>
            <person name="Baxendale J."/>
            <person name="Bayraktaroglu L."/>
            <person name="Beasley E.M."/>
            <person name="Beeson K.Y."/>
            <person name="Benos P.V."/>
            <person name="Berman B.P."/>
            <person name="Bhandari D."/>
            <person name="Bolshakov S."/>
            <person name="Borkova D."/>
            <person name="Botchan M.R."/>
            <person name="Bouck J."/>
            <person name="Brokstein P."/>
            <person name="Brottier P."/>
            <person name="Burtis K.C."/>
            <person name="Busam D.A."/>
            <person name="Butler H."/>
            <person name="Cadieu E."/>
            <person name="Center A."/>
            <person name="Chandra I."/>
            <person name="Cherry J.M."/>
            <person name="Cawley S."/>
            <person name="Dahlke C."/>
            <person name="Davenport L.B."/>
            <person name="Davies P."/>
            <person name="de Pablos B."/>
            <person name="Delcher A."/>
            <person name="Deng Z."/>
            <person name="Mays A.D."/>
            <person name="Dew I."/>
            <person name="Dietz S.M."/>
            <person name="Dodson K."/>
            <person name="Doup L.E."/>
            <person name="Downes M."/>
            <person name="Dugan-Rocha S."/>
            <person name="Dunkov B.C."/>
            <person name="Dunn P."/>
            <person name="Durbin K.J."/>
            <person name="Evangelista C.C."/>
            <person name="Ferraz C."/>
            <person name="Ferriera S."/>
            <person name="Fleischmann W."/>
            <person name="Fosler C."/>
            <person name="Gabrielian A.E."/>
            <person name="Garg N.S."/>
            <person name="Gelbart W.M."/>
            <person name="Glasser K."/>
            <person name="Glodek A."/>
            <person name="Gong F."/>
            <person name="Gorrell J.H."/>
            <person name="Gu Z."/>
            <person name="Guan P."/>
            <person name="Harris M."/>
            <person name="Harris N.L."/>
            <person name="Harvey D.A."/>
            <person name="Heiman T.J."/>
            <person name="Hernandez J.R."/>
            <person name="Houck J."/>
            <person name="Hostin D."/>
            <person name="Houston K.A."/>
            <person name="Howland T.J."/>
            <person name="Wei M.-H."/>
            <person name="Ibegwam C."/>
            <person name="Jalali M."/>
            <person name="Kalush F."/>
            <person name="Karpen G.H."/>
            <person name="Ke Z."/>
            <person name="Kennison J.A."/>
            <person name="Ketchum K.A."/>
            <person name="Kimmel B.E."/>
            <person name="Kodira C.D."/>
            <person name="Kraft C.L."/>
            <person name="Kravitz S."/>
            <person name="Kulp D."/>
            <person name="Lai Z."/>
            <person name="Lasko P."/>
            <person name="Lei Y."/>
            <person name="Levitsky A.A."/>
            <person name="Li J.H."/>
            <person name="Li Z."/>
            <person name="Liang Y."/>
            <person name="Lin X."/>
            <person name="Liu X."/>
            <person name="Mattei B."/>
            <person name="McIntosh T.C."/>
            <person name="McLeod M.P."/>
            <person name="McPherson D."/>
            <person name="Merkulov G."/>
            <person name="Milshina N.V."/>
            <person name="Mobarry C."/>
            <person name="Morris J."/>
            <person name="Moshrefi A."/>
            <person name="Mount S.M."/>
            <person name="Moy M."/>
            <person name="Murphy B."/>
            <person name="Murphy L."/>
            <person name="Muzny D.M."/>
            <person name="Nelson D.L."/>
            <person name="Nelson D.R."/>
            <person name="Nelson K.A."/>
            <person name="Nixon K."/>
            <person name="Nusskern D.R."/>
            <person name="Pacleb J.M."/>
            <person name="Palazzolo M."/>
            <person name="Pittman G.S."/>
            <person name="Pan S."/>
            <person name="Pollard J."/>
            <person name="Puri V."/>
            <person name="Reese M.G."/>
            <person name="Reinert K."/>
            <person name="Remington K."/>
            <person name="Saunders R.D.C."/>
            <person name="Scheeler F."/>
            <person name="Shen H."/>
            <person name="Shue B.C."/>
            <person name="Siden-Kiamos I."/>
            <person name="Simpson M."/>
            <person name="Skupski M.P."/>
            <person name="Smith T.J."/>
            <person name="Spier E."/>
            <person name="Spradling A.C."/>
            <person name="Stapleton M."/>
            <person name="Strong R."/>
            <person name="Sun E."/>
            <person name="Svirskas R."/>
            <person name="Tector C."/>
            <person name="Turner R."/>
            <person name="Venter E."/>
            <person name="Wang A.H."/>
            <person name="Wang X."/>
            <person name="Wang Z.-Y."/>
            <person name="Wassarman D.A."/>
            <person name="Weinstock G.M."/>
            <person name="Weissenbach J."/>
            <person name="Williams S.M."/>
            <person name="Woodage T."/>
            <person name="Worley K.C."/>
            <person name="Wu D."/>
            <person name="Yang S."/>
            <person name="Yao Q.A."/>
            <person name="Ye J."/>
            <person name="Yeh R.-F."/>
            <person name="Zaveri J.S."/>
            <person name="Zhan M."/>
            <person name="Zhang G."/>
            <person name="Zhao Q."/>
            <person name="Zheng L."/>
            <person name="Zheng X.H."/>
            <person name="Zhong F.N."/>
            <person name="Zhong W."/>
            <person name="Zhou X."/>
            <person name="Zhu S.C."/>
            <person name="Zhu X."/>
            <person name="Smith H.O."/>
            <person name="Gibbs R.A."/>
            <person name="Myers E.W."/>
            <person name="Rubin G.M."/>
            <person name="Venter J.C."/>
        </authorList>
    </citation>
    <scope>NUCLEOTIDE SEQUENCE [LARGE SCALE GENOMIC DNA]</scope>
    <source>
        <strain>Berkeley</strain>
    </source>
</reference>
<reference key="2">
    <citation type="journal article" date="2002" name="Genome Biol.">
        <title>Annotation of the Drosophila melanogaster euchromatic genome: a systematic review.</title>
        <authorList>
            <person name="Misra S."/>
            <person name="Crosby M.A."/>
            <person name="Mungall C.J."/>
            <person name="Matthews B.B."/>
            <person name="Campbell K.S."/>
            <person name="Hradecky P."/>
            <person name="Huang Y."/>
            <person name="Kaminker J.S."/>
            <person name="Millburn G.H."/>
            <person name="Prochnik S.E."/>
            <person name="Smith C.D."/>
            <person name="Tupy J.L."/>
            <person name="Whitfield E.J."/>
            <person name="Bayraktaroglu L."/>
            <person name="Berman B.P."/>
            <person name="Bettencourt B.R."/>
            <person name="Celniker S.E."/>
            <person name="de Grey A.D.N.J."/>
            <person name="Drysdale R.A."/>
            <person name="Harris N.L."/>
            <person name="Richter J."/>
            <person name="Russo S."/>
            <person name="Schroeder A.J."/>
            <person name="Shu S.Q."/>
            <person name="Stapleton M."/>
            <person name="Yamada C."/>
            <person name="Ashburner M."/>
            <person name="Gelbart W.M."/>
            <person name="Rubin G.M."/>
            <person name="Lewis S.E."/>
        </authorList>
    </citation>
    <scope>GENOME REANNOTATION</scope>
    <source>
        <strain>Berkeley</strain>
    </source>
</reference>
<reference key="3">
    <citation type="journal article" date="2002" name="Genome Biol.">
        <title>A Drosophila full-length cDNA resource.</title>
        <authorList>
            <person name="Stapleton M."/>
            <person name="Carlson J.W."/>
            <person name="Brokstein P."/>
            <person name="Yu C."/>
            <person name="Champe M."/>
            <person name="George R.A."/>
            <person name="Guarin H."/>
            <person name="Kronmiller B."/>
            <person name="Pacleb J.M."/>
            <person name="Park S."/>
            <person name="Wan K.H."/>
            <person name="Rubin G.M."/>
            <person name="Celniker S.E."/>
        </authorList>
    </citation>
    <scope>NUCLEOTIDE SEQUENCE [LARGE SCALE MRNA]</scope>
    <source>
        <strain>Berkeley</strain>
        <tissue>Head</tissue>
    </source>
</reference>
<comment type="similarity">
    <text evidence="3">Belongs to the DRC1 family.</text>
</comment>
<evidence type="ECO:0000255" key="1"/>
<evidence type="ECO:0000256" key="2">
    <source>
        <dbReference type="SAM" id="MobiDB-lite"/>
    </source>
</evidence>
<evidence type="ECO:0000305" key="3"/>
<sequence>MDDNEDELEEHQELVSDGSVEEEEEVEPDLGPVDSWESFNDRIDGLIFNERCDKSVKKLDERRLAILNRVRQQFREAPKGVAERCQAQKSPIDQRLELSSERLNELVRFGKELVTNVRVANERRELNRRLFEGAQKNQMHVKLQRESVETMARFENIKARWTELEETNEPMLLWDQIEEQKKRIAEIMARKDEMISACQAEVDRMNAKYEFDRERQAQDLCCLVERVDHQVETLKEAYKEHIQMLRQTIEEERQIFADNAVEKWRTFFDAMNANFDEKANLVRAREQFYARQTQQINESQEELTKSTRIRLEKECERLELELRRTRDNVLMNSEKLDYNYQVLQKRNEENVIINNQQKRRVARLHEAIGRTRRGLKNLYNTGKRNIARLSSDIYKLHSNINDMESKAHQARLNNREKFDRIWEINYKELNLLVDRVYHIDRIIHEQQLAMPWSSPVPPIPNINKAKKKRNNILEKFDMRIGRVPKNRVMPNSGVNCKPDIKELPPDSLRLMRNLIRKLSDRGGFLIEERLLKILEPYSEEEKCLVRIDNIFAALRIRHLRDVKELTKVFMPYTYCPNCQPQGLSPRKCAEVFMKDQKPNRLQGAAGGQPDEKEHRSTGDTFLPKSEVAAKRCHNHYLVMEPALCLHAMNLFTSKMHKKMYEHEPGSILNAVNLIQITDAEIRNFWRQFSACFPASKCKLWKTLEHGLNHYVEVLKMRVQYDAEVVFLRRQNEELRHLLQKFTV</sequence>
<accession>Q9W3J8</accession>
<name>DRC1_DROME</name>
<gene>
    <name type="ORF">CG10958</name>
</gene>
<protein>
    <recommendedName>
        <fullName>Dynein regulatory complex protein 1 homolog</fullName>
    </recommendedName>
</protein>
<keyword id="KW-0175">Coiled coil</keyword>
<keyword id="KW-1185">Reference proteome</keyword>